<proteinExistence type="inferred from homology"/>
<name>ASAR_AERSA</name>
<evidence type="ECO:0000255" key="1">
    <source>
        <dbReference type="PROSITE-ProRule" id="PRU00411"/>
    </source>
</evidence>
<evidence type="ECO:0000303" key="2">
    <source>
    </source>
</evidence>
<evidence type="ECO:0000305" key="3"/>
<reference key="1">
    <citation type="journal article" date="1997" name="J. Bacteriol.">
        <title>Quorum sensing in Aeromonas hydrophila and Aeromonas salmonicida: identification of the LuxRI homologs AhyRI and AsaRI and their cognate N-acylhomoserine lactone signal molecules.</title>
        <authorList>
            <person name="Swift S."/>
            <person name="Karlyshev A.V."/>
            <person name="Fish L."/>
            <person name="Durant E.L."/>
            <person name="Winson M.K."/>
            <person name="Chhabra S.R."/>
            <person name="Williams P."/>
            <person name="Macintyre S."/>
            <person name="Stewart G.S.A.B."/>
        </authorList>
    </citation>
    <scope>NUCLEOTIDE SEQUENCE [GENOMIC DNA]</scope>
    <source>
        <strain>ATCC 33658 / DSM 19634 / JCM 7874 / NCIMB 1102 / NCTC 12959</strain>
    </source>
</reference>
<keyword id="KW-0010">Activator</keyword>
<keyword id="KW-0238">DNA-binding</keyword>
<keyword id="KW-0673">Quorum sensing</keyword>
<keyword id="KW-0804">Transcription</keyword>
<keyword id="KW-0805">Transcription regulation</keyword>
<sequence length="260" mass="29350">MKQDQLLEYLEHFTSVTDGDRLAELIGRFTLGMGYDYYRFALIIPMSMQRPKVVLFNQCPDSWVQAYTANHMLACDPIIQLARKQTLPIYWNRLDERARFLQEGSLDVMGLAAEFGLRNGISFPLHGAAGENGILSFITAERASSDLLLESSPILSWMSNYIFEAAIRIVRVSLREDDPQEALTDRETECLFWASEGKTSGEIACILGITERTVNYHLNQVTRKTGSMNRYQAIAKGVSSGILLPNLEQVVVTNFPKLMQ</sequence>
<protein>
    <recommendedName>
        <fullName evidence="3">Transcriptional activator protein AsaR</fullName>
    </recommendedName>
</protein>
<comment type="function">
    <text>Functions as a BHL-responsive transcriptional regulator.</text>
</comment>
<comment type="similarity">
    <text evidence="3">Belongs to the autoinducer-regulated transcriptional regulatory protein family.</text>
</comment>
<accession>P0A3J6</accession>
<accession>Q44059</accession>
<feature type="chain" id="PRO_0000184138" description="Transcriptional activator protein AsaR">
    <location>
        <begin position="1"/>
        <end position="260"/>
    </location>
</feature>
<feature type="domain" description="HTH luxR-type" evidence="1">
    <location>
        <begin position="176"/>
        <end position="241"/>
    </location>
</feature>
<feature type="DNA-binding region" description="H-T-H motif" evidence="1">
    <location>
        <begin position="200"/>
        <end position="219"/>
    </location>
</feature>
<dbReference type="EMBL" id="U65741">
    <property type="protein sequence ID" value="AAB70018.1"/>
    <property type="molecule type" value="Genomic_DNA"/>
</dbReference>
<dbReference type="RefSeq" id="WP_005315931.1">
    <property type="nucleotide sequence ID" value="NZ_VOIP01000002.1"/>
</dbReference>
<dbReference type="SMR" id="P0A3J6"/>
<dbReference type="STRING" id="1233098.GCA_000315855_00760"/>
<dbReference type="OMA" id="NHTVDWY"/>
<dbReference type="GO" id="GO:0003677">
    <property type="term" value="F:DNA binding"/>
    <property type="evidence" value="ECO:0007669"/>
    <property type="project" value="UniProtKB-KW"/>
</dbReference>
<dbReference type="GO" id="GO:0009372">
    <property type="term" value="P:quorum sensing"/>
    <property type="evidence" value="ECO:0007669"/>
    <property type="project" value="UniProtKB-KW"/>
</dbReference>
<dbReference type="GO" id="GO:0006355">
    <property type="term" value="P:regulation of DNA-templated transcription"/>
    <property type="evidence" value="ECO:0007669"/>
    <property type="project" value="InterPro"/>
</dbReference>
<dbReference type="CDD" id="cd06170">
    <property type="entry name" value="LuxR_C_like"/>
    <property type="match status" value="1"/>
</dbReference>
<dbReference type="Gene3D" id="3.30.450.80">
    <property type="entry name" value="Transcription factor LuxR-like, autoinducer-binding domain"/>
    <property type="match status" value="1"/>
</dbReference>
<dbReference type="Gene3D" id="1.10.10.10">
    <property type="entry name" value="Winged helix-like DNA-binding domain superfamily/Winged helix DNA-binding domain"/>
    <property type="match status" value="1"/>
</dbReference>
<dbReference type="InterPro" id="IPR016032">
    <property type="entry name" value="Sig_transdc_resp-reg_C-effctor"/>
</dbReference>
<dbReference type="InterPro" id="IPR005143">
    <property type="entry name" value="TF_LuxR_autoind-bd_dom"/>
</dbReference>
<dbReference type="InterPro" id="IPR036693">
    <property type="entry name" value="TF_LuxR_autoind-bd_dom_sf"/>
</dbReference>
<dbReference type="InterPro" id="IPR000792">
    <property type="entry name" value="Tscrpt_reg_LuxR_C"/>
</dbReference>
<dbReference type="InterPro" id="IPR036388">
    <property type="entry name" value="WH-like_DNA-bd_sf"/>
</dbReference>
<dbReference type="PANTHER" id="PTHR44688">
    <property type="entry name" value="DNA-BINDING TRANSCRIPTIONAL ACTIVATOR DEVR_DOSR"/>
    <property type="match status" value="1"/>
</dbReference>
<dbReference type="PANTHER" id="PTHR44688:SF16">
    <property type="entry name" value="DNA-BINDING TRANSCRIPTIONAL ACTIVATOR DEVR_DOSR"/>
    <property type="match status" value="1"/>
</dbReference>
<dbReference type="Pfam" id="PF03472">
    <property type="entry name" value="Autoind_bind"/>
    <property type="match status" value="1"/>
</dbReference>
<dbReference type="Pfam" id="PF00196">
    <property type="entry name" value="GerE"/>
    <property type="match status" value="1"/>
</dbReference>
<dbReference type="PRINTS" id="PR00038">
    <property type="entry name" value="HTHLUXR"/>
</dbReference>
<dbReference type="SMART" id="SM00421">
    <property type="entry name" value="HTH_LUXR"/>
    <property type="match status" value="1"/>
</dbReference>
<dbReference type="SUPFAM" id="SSF46894">
    <property type="entry name" value="C-terminal effector domain of the bipartite response regulators"/>
    <property type="match status" value="1"/>
</dbReference>
<dbReference type="SUPFAM" id="SSF75516">
    <property type="entry name" value="Pheromone-binding domain of LuxR-like quorum-sensing transcription factors"/>
    <property type="match status" value="1"/>
</dbReference>
<dbReference type="PROSITE" id="PS50043">
    <property type="entry name" value="HTH_LUXR_2"/>
    <property type="match status" value="1"/>
</dbReference>
<organism>
    <name type="scientific">Aeromonas salmonicida</name>
    <dbReference type="NCBI Taxonomy" id="645"/>
    <lineage>
        <taxon>Bacteria</taxon>
        <taxon>Pseudomonadati</taxon>
        <taxon>Pseudomonadota</taxon>
        <taxon>Gammaproteobacteria</taxon>
        <taxon>Aeromonadales</taxon>
        <taxon>Aeromonadaceae</taxon>
        <taxon>Aeromonas</taxon>
    </lineage>
</organism>
<gene>
    <name evidence="2" type="primary">asaR</name>
</gene>